<name>Y1207_STAEQ</name>
<sequence>MDNKDNRKFYLIREDVLPESVIKTLKVKDALKNNSNLSIYDAVKQFNLSRSAFYKYRETIFPVDEKILDQREFTLILYVNDIVGMLAQVLNAISQLQLSVLTIHQSVPIEDKATITLSLNARNSNLSIDEVIESLREINHVTKVDLISMTM</sequence>
<dbReference type="EMBL" id="CP000029">
    <property type="protein sequence ID" value="AAW54600.1"/>
    <property type="molecule type" value="Genomic_DNA"/>
</dbReference>
<dbReference type="RefSeq" id="WP_001830784.1">
    <property type="nucleotide sequence ID" value="NC_002976.3"/>
</dbReference>
<dbReference type="SMR" id="Q5HNQ8"/>
<dbReference type="STRING" id="176279.SERP1207"/>
<dbReference type="KEGG" id="ser:SERP1207"/>
<dbReference type="eggNOG" id="COG4492">
    <property type="taxonomic scope" value="Bacteria"/>
</dbReference>
<dbReference type="HOGENOM" id="CLU_128147_0_0_9"/>
<dbReference type="Proteomes" id="UP000000531">
    <property type="component" value="Chromosome"/>
</dbReference>
<dbReference type="Gene3D" id="3.30.70.260">
    <property type="match status" value="1"/>
</dbReference>
<dbReference type="HAMAP" id="MF_00707">
    <property type="entry name" value="UPF0735"/>
    <property type="match status" value="1"/>
</dbReference>
<dbReference type="InterPro" id="IPR045865">
    <property type="entry name" value="ACT-like_dom_sf"/>
</dbReference>
<dbReference type="InterPro" id="IPR002912">
    <property type="entry name" value="ACT_dom"/>
</dbReference>
<dbReference type="InterPro" id="IPR008310">
    <property type="entry name" value="UPF0735_ACT_dom-cont"/>
</dbReference>
<dbReference type="NCBIfam" id="NF003361">
    <property type="entry name" value="PRK04435.1"/>
    <property type="match status" value="1"/>
</dbReference>
<dbReference type="PIRSF" id="PIRSF025624">
    <property type="entry name" value="ACT_PheB"/>
    <property type="match status" value="1"/>
</dbReference>
<dbReference type="SUPFAM" id="SSF55021">
    <property type="entry name" value="ACT-like"/>
    <property type="match status" value="1"/>
</dbReference>
<dbReference type="PROSITE" id="PS51671">
    <property type="entry name" value="ACT"/>
    <property type="match status" value="1"/>
</dbReference>
<gene>
    <name type="ordered locus">SERP1207</name>
</gene>
<protein>
    <recommendedName>
        <fullName evidence="1">UPF0735 ACT domain-containing protein SERP1207</fullName>
    </recommendedName>
</protein>
<accession>Q5HNQ8</accession>
<proteinExistence type="inferred from homology"/>
<organism>
    <name type="scientific">Staphylococcus epidermidis (strain ATCC 35984 / DSM 28319 / BCRC 17069 / CCUG 31568 / BM 3577 / RP62A)</name>
    <dbReference type="NCBI Taxonomy" id="176279"/>
    <lineage>
        <taxon>Bacteria</taxon>
        <taxon>Bacillati</taxon>
        <taxon>Bacillota</taxon>
        <taxon>Bacilli</taxon>
        <taxon>Bacillales</taxon>
        <taxon>Staphylococcaceae</taxon>
        <taxon>Staphylococcus</taxon>
    </lineage>
</organism>
<feature type="chain" id="PRO_0000206481" description="UPF0735 ACT domain-containing protein SERP1207">
    <location>
        <begin position="1"/>
        <end position="151"/>
    </location>
</feature>
<feature type="domain" description="ACT" evidence="1">
    <location>
        <begin position="74"/>
        <end position="149"/>
    </location>
</feature>
<comment type="similarity">
    <text evidence="1">Belongs to the UPF0735 family.</text>
</comment>
<keyword id="KW-1185">Reference proteome</keyword>
<evidence type="ECO:0000255" key="1">
    <source>
        <dbReference type="HAMAP-Rule" id="MF_00707"/>
    </source>
</evidence>
<reference key="1">
    <citation type="journal article" date="2005" name="J. Bacteriol.">
        <title>Insights on evolution of virulence and resistance from the complete genome analysis of an early methicillin-resistant Staphylococcus aureus strain and a biofilm-producing methicillin-resistant Staphylococcus epidermidis strain.</title>
        <authorList>
            <person name="Gill S.R."/>
            <person name="Fouts D.E."/>
            <person name="Archer G.L."/>
            <person name="Mongodin E.F."/>
            <person name="DeBoy R.T."/>
            <person name="Ravel J."/>
            <person name="Paulsen I.T."/>
            <person name="Kolonay J.F."/>
            <person name="Brinkac L.M."/>
            <person name="Beanan M.J."/>
            <person name="Dodson R.J."/>
            <person name="Daugherty S.C."/>
            <person name="Madupu R."/>
            <person name="Angiuoli S.V."/>
            <person name="Durkin A.S."/>
            <person name="Haft D.H."/>
            <person name="Vamathevan J.J."/>
            <person name="Khouri H."/>
            <person name="Utterback T.R."/>
            <person name="Lee C."/>
            <person name="Dimitrov G."/>
            <person name="Jiang L."/>
            <person name="Qin H."/>
            <person name="Weidman J."/>
            <person name="Tran K."/>
            <person name="Kang K.H."/>
            <person name="Hance I.R."/>
            <person name="Nelson K.E."/>
            <person name="Fraser C.M."/>
        </authorList>
    </citation>
    <scope>NUCLEOTIDE SEQUENCE [LARGE SCALE GENOMIC DNA]</scope>
    <source>
        <strain>ATCC 35984 / DSM 28319 / BCRC 17069 / CCUG 31568 / BM 3577 / RP62A</strain>
    </source>
</reference>